<proteinExistence type="inferred from homology"/>
<comment type="subunit">
    <text evidence="1">Part of the 50S ribosomal subunit. Contacts protein L32.</text>
</comment>
<comment type="similarity">
    <text evidence="1">Belongs to the bacterial ribosomal protein bL17 family.</text>
</comment>
<organism>
    <name type="scientific">Shewanella loihica (strain ATCC BAA-1088 / PV-4)</name>
    <dbReference type="NCBI Taxonomy" id="323850"/>
    <lineage>
        <taxon>Bacteria</taxon>
        <taxon>Pseudomonadati</taxon>
        <taxon>Pseudomonadota</taxon>
        <taxon>Gammaproteobacteria</taxon>
        <taxon>Alteromonadales</taxon>
        <taxon>Shewanellaceae</taxon>
        <taxon>Shewanella</taxon>
    </lineage>
</organism>
<feature type="chain" id="PRO_1000055941" description="Large ribosomal subunit protein bL17">
    <location>
        <begin position="1"/>
        <end position="130"/>
    </location>
</feature>
<evidence type="ECO:0000255" key="1">
    <source>
        <dbReference type="HAMAP-Rule" id="MF_01368"/>
    </source>
</evidence>
<evidence type="ECO:0000305" key="2"/>
<protein>
    <recommendedName>
        <fullName evidence="1">Large ribosomal subunit protein bL17</fullName>
    </recommendedName>
    <alternativeName>
        <fullName evidence="2">50S ribosomal protein L17</fullName>
    </alternativeName>
</protein>
<sequence length="130" mass="14659">MRHRKSGRQLNRNSSHRQAMFRNMASSLVRHEVIKTTVAKAKELRRVVEPLITLAKSDSVANRRLAFARTRDAEVVGKLFNELGPRYQERPGGYTRILKCGLRTGDKAPMAYIELVGRPEAAEAVEEAAE</sequence>
<gene>
    <name evidence="1" type="primary">rplQ</name>
    <name type="ordered locus">Shew_0184</name>
</gene>
<keyword id="KW-1185">Reference proteome</keyword>
<keyword id="KW-0687">Ribonucleoprotein</keyword>
<keyword id="KW-0689">Ribosomal protein</keyword>
<name>RL17_SHELP</name>
<accession>A3Q9A8</accession>
<dbReference type="EMBL" id="CP000606">
    <property type="protein sequence ID" value="ABO22056.1"/>
    <property type="molecule type" value="Genomic_DNA"/>
</dbReference>
<dbReference type="RefSeq" id="WP_011863991.1">
    <property type="nucleotide sequence ID" value="NC_009092.1"/>
</dbReference>
<dbReference type="SMR" id="A3Q9A8"/>
<dbReference type="STRING" id="323850.Shew_0184"/>
<dbReference type="KEGG" id="slo:Shew_0184"/>
<dbReference type="eggNOG" id="COG0203">
    <property type="taxonomic scope" value="Bacteria"/>
</dbReference>
<dbReference type="HOGENOM" id="CLU_074407_2_0_6"/>
<dbReference type="OrthoDB" id="9809073at2"/>
<dbReference type="Proteomes" id="UP000001558">
    <property type="component" value="Chromosome"/>
</dbReference>
<dbReference type="GO" id="GO:0022625">
    <property type="term" value="C:cytosolic large ribosomal subunit"/>
    <property type="evidence" value="ECO:0007669"/>
    <property type="project" value="TreeGrafter"/>
</dbReference>
<dbReference type="GO" id="GO:0003735">
    <property type="term" value="F:structural constituent of ribosome"/>
    <property type="evidence" value="ECO:0007669"/>
    <property type="project" value="InterPro"/>
</dbReference>
<dbReference type="GO" id="GO:0006412">
    <property type="term" value="P:translation"/>
    <property type="evidence" value="ECO:0007669"/>
    <property type="project" value="UniProtKB-UniRule"/>
</dbReference>
<dbReference type="FunFam" id="3.90.1030.10:FF:000001">
    <property type="entry name" value="50S ribosomal protein L17"/>
    <property type="match status" value="1"/>
</dbReference>
<dbReference type="Gene3D" id="3.90.1030.10">
    <property type="entry name" value="Ribosomal protein L17"/>
    <property type="match status" value="1"/>
</dbReference>
<dbReference type="HAMAP" id="MF_01368">
    <property type="entry name" value="Ribosomal_bL17"/>
    <property type="match status" value="1"/>
</dbReference>
<dbReference type="InterPro" id="IPR000456">
    <property type="entry name" value="Ribosomal_bL17"/>
</dbReference>
<dbReference type="InterPro" id="IPR047859">
    <property type="entry name" value="Ribosomal_bL17_CS"/>
</dbReference>
<dbReference type="InterPro" id="IPR036373">
    <property type="entry name" value="Ribosomal_bL17_sf"/>
</dbReference>
<dbReference type="NCBIfam" id="TIGR00059">
    <property type="entry name" value="L17"/>
    <property type="match status" value="1"/>
</dbReference>
<dbReference type="PANTHER" id="PTHR14413:SF16">
    <property type="entry name" value="LARGE RIBOSOMAL SUBUNIT PROTEIN BL17M"/>
    <property type="match status" value="1"/>
</dbReference>
<dbReference type="PANTHER" id="PTHR14413">
    <property type="entry name" value="RIBOSOMAL PROTEIN L17"/>
    <property type="match status" value="1"/>
</dbReference>
<dbReference type="Pfam" id="PF01196">
    <property type="entry name" value="Ribosomal_L17"/>
    <property type="match status" value="1"/>
</dbReference>
<dbReference type="SUPFAM" id="SSF64263">
    <property type="entry name" value="Prokaryotic ribosomal protein L17"/>
    <property type="match status" value="1"/>
</dbReference>
<dbReference type="PROSITE" id="PS01167">
    <property type="entry name" value="RIBOSOMAL_L17"/>
    <property type="match status" value="1"/>
</dbReference>
<reference key="1">
    <citation type="submission" date="2007-03" db="EMBL/GenBank/DDBJ databases">
        <title>Complete sequence of Shewanella loihica PV-4.</title>
        <authorList>
            <consortium name="US DOE Joint Genome Institute"/>
            <person name="Copeland A."/>
            <person name="Lucas S."/>
            <person name="Lapidus A."/>
            <person name="Barry K."/>
            <person name="Detter J.C."/>
            <person name="Glavina del Rio T."/>
            <person name="Hammon N."/>
            <person name="Israni S."/>
            <person name="Dalin E."/>
            <person name="Tice H."/>
            <person name="Pitluck S."/>
            <person name="Chain P."/>
            <person name="Malfatti S."/>
            <person name="Shin M."/>
            <person name="Vergez L."/>
            <person name="Schmutz J."/>
            <person name="Larimer F."/>
            <person name="Land M."/>
            <person name="Hauser L."/>
            <person name="Kyrpides N."/>
            <person name="Mikhailova N."/>
            <person name="Romine M.F."/>
            <person name="Serres G."/>
            <person name="Fredrickson J."/>
            <person name="Tiedje J."/>
            <person name="Richardson P."/>
        </authorList>
    </citation>
    <scope>NUCLEOTIDE SEQUENCE [LARGE SCALE GENOMIC DNA]</scope>
    <source>
        <strain>ATCC BAA-1088 / PV-4</strain>
    </source>
</reference>